<organism>
    <name type="scientific">Desulfitobacterium hafniense (strain DSM 10664 / DCB-2)</name>
    <dbReference type="NCBI Taxonomy" id="272564"/>
    <lineage>
        <taxon>Bacteria</taxon>
        <taxon>Bacillati</taxon>
        <taxon>Bacillota</taxon>
        <taxon>Clostridia</taxon>
        <taxon>Eubacteriales</taxon>
        <taxon>Desulfitobacteriaceae</taxon>
        <taxon>Desulfitobacterium</taxon>
    </lineage>
</organism>
<keyword id="KW-0030">Aminoacyl-tRNA synthetase</keyword>
<keyword id="KW-0067">ATP-binding</keyword>
<keyword id="KW-0963">Cytoplasm</keyword>
<keyword id="KW-0436">Ligase</keyword>
<keyword id="KW-0547">Nucleotide-binding</keyword>
<keyword id="KW-0648">Protein biosynthesis</keyword>
<dbReference type="EC" id="6.1.1.11" evidence="1"/>
<dbReference type="EMBL" id="CP001336">
    <property type="protein sequence ID" value="ACL18078.1"/>
    <property type="molecule type" value="Genomic_DNA"/>
</dbReference>
<dbReference type="RefSeq" id="WP_012615307.1">
    <property type="nucleotide sequence ID" value="NC_011830.1"/>
</dbReference>
<dbReference type="SMR" id="B8FXX3"/>
<dbReference type="KEGG" id="dhd:Dhaf_0008"/>
<dbReference type="HOGENOM" id="CLU_023797_1_1_9"/>
<dbReference type="UniPathway" id="UPA00906">
    <property type="reaction ID" value="UER00895"/>
</dbReference>
<dbReference type="Proteomes" id="UP000007726">
    <property type="component" value="Chromosome"/>
</dbReference>
<dbReference type="GO" id="GO:0005737">
    <property type="term" value="C:cytoplasm"/>
    <property type="evidence" value="ECO:0007669"/>
    <property type="project" value="UniProtKB-SubCell"/>
</dbReference>
<dbReference type="GO" id="GO:0005524">
    <property type="term" value="F:ATP binding"/>
    <property type="evidence" value="ECO:0007669"/>
    <property type="project" value="UniProtKB-UniRule"/>
</dbReference>
<dbReference type="GO" id="GO:0140096">
    <property type="term" value="F:catalytic activity, acting on a protein"/>
    <property type="evidence" value="ECO:0007669"/>
    <property type="project" value="UniProtKB-ARBA"/>
</dbReference>
<dbReference type="GO" id="GO:0004828">
    <property type="term" value="F:serine-tRNA ligase activity"/>
    <property type="evidence" value="ECO:0007669"/>
    <property type="project" value="UniProtKB-UniRule"/>
</dbReference>
<dbReference type="GO" id="GO:0016740">
    <property type="term" value="F:transferase activity"/>
    <property type="evidence" value="ECO:0007669"/>
    <property type="project" value="UniProtKB-ARBA"/>
</dbReference>
<dbReference type="GO" id="GO:0016260">
    <property type="term" value="P:selenocysteine biosynthetic process"/>
    <property type="evidence" value="ECO:0007669"/>
    <property type="project" value="UniProtKB-UniRule"/>
</dbReference>
<dbReference type="GO" id="GO:0006434">
    <property type="term" value="P:seryl-tRNA aminoacylation"/>
    <property type="evidence" value="ECO:0007669"/>
    <property type="project" value="UniProtKB-UniRule"/>
</dbReference>
<dbReference type="CDD" id="cd00770">
    <property type="entry name" value="SerRS_core"/>
    <property type="match status" value="1"/>
</dbReference>
<dbReference type="Gene3D" id="3.30.930.10">
    <property type="entry name" value="Bira Bifunctional Protein, Domain 2"/>
    <property type="match status" value="1"/>
</dbReference>
<dbReference type="Gene3D" id="1.10.287.40">
    <property type="entry name" value="Serine-tRNA synthetase, tRNA binding domain"/>
    <property type="match status" value="1"/>
</dbReference>
<dbReference type="HAMAP" id="MF_00176">
    <property type="entry name" value="Ser_tRNA_synth_type1"/>
    <property type="match status" value="1"/>
</dbReference>
<dbReference type="InterPro" id="IPR002314">
    <property type="entry name" value="aa-tRNA-synt_IIb"/>
</dbReference>
<dbReference type="InterPro" id="IPR006195">
    <property type="entry name" value="aa-tRNA-synth_II"/>
</dbReference>
<dbReference type="InterPro" id="IPR045864">
    <property type="entry name" value="aa-tRNA-synth_II/BPL/LPL"/>
</dbReference>
<dbReference type="InterPro" id="IPR002317">
    <property type="entry name" value="Ser-tRNA-ligase_type_1"/>
</dbReference>
<dbReference type="InterPro" id="IPR015866">
    <property type="entry name" value="Ser-tRNA-synth_1_N"/>
</dbReference>
<dbReference type="InterPro" id="IPR042103">
    <property type="entry name" value="SerRS_1_N_sf"/>
</dbReference>
<dbReference type="InterPro" id="IPR033729">
    <property type="entry name" value="SerRS_core"/>
</dbReference>
<dbReference type="InterPro" id="IPR010978">
    <property type="entry name" value="tRNA-bd_arm"/>
</dbReference>
<dbReference type="NCBIfam" id="TIGR00414">
    <property type="entry name" value="serS"/>
    <property type="match status" value="1"/>
</dbReference>
<dbReference type="PANTHER" id="PTHR43697:SF1">
    <property type="entry name" value="SERINE--TRNA LIGASE"/>
    <property type="match status" value="1"/>
</dbReference>
<dbReference type="PANTHER" id="PTHR43697">
    <property type="entry name" value="SERYL-TRNA SYNTHETASE"/>
    <property type="match status" value="1"/>
</dbReference>
<dbReference type="Pfam" id="PF02403">
    <property type="entry name" value="Seryl_tRNA_N"/>
    <property type="match status" value="1"/>
</dbReference>
<dbReference type="Pfam" id="PF00587">
    <property type="entry name" value="tRNA-synt_2b"/>
    <property type="match status" value="1"/>
</dbReference>
<dbReference type="PIRSF" id="PIRSF001529">
    <property type="entry name" value="Ser-tRNA-synth_IIa"/>
    <property type="match status" value="1"/>
</dbReference>
<dbReference type="PRINTS" id="PR00981">
    <property type="entry name" value="TRNASYNTHSER"/>
</dbReference>
<dbReference type="SUPFAM" id="SSF55681">
    <property type="entry name" value="Class II aaRS and biotin synthetases"/>
    <property type="match status" value="1"/>
</dbReference>
<dbReference type="SUPFAM" id="SSF46589">
    <property type="entry name" value="tRNA-binding arm"/>
    <property type="match status" value="1"/>
</dbReference>
<dbReference type="PROSITE" id="PS50862">
    <property type="entry name" value="AA_TRNA_LIGASE_II"/>
    <property type="match status" value="1"/>
</dbReference>
<feature type="chain" id="PRO_1000199471" description="Serine--tRNA ligase">
    <location>
        <begin position="1"/>
        <end position="421"/>
    </location>
</feature>
<feature type="binding site" evidence="1">
    <location>
        <begin position="229"/>
        <end position="231"/>
    </location>
    <ligand>
        <name>L-serine</name>
        <dbReference type="ChEBI" id="CHEBI:33384"/>
    </ligand>
</feature>
<feature type="binding site" evidence="1">
    <location>
        <begin position="260"/>
        <end position="262"/>
    </location>
    <ligand>
        <name>ATP</name>
        <dbReference type="ChEBI" id="CHEBI:30616"/>
    </ligand>
</feature>
<feature type="binding site" evidence="1">
    <location>
        <position position="283"/>
    </location>
    <ligand>
        <name>L-serine</name>
        <dbReference type="ChEBI" id="CHEBI:33384"/>
    </ligand>
</feature>
<feature type="binding site" evidence="1">
    <location>
        <begin position="347"/>
        <end position="350"/>
    </location>
    <ligand>
        <name>ATP</name>
        <dbReference type="ChEBI" id="CHEBI:30616"/>
    </ligand>
</feature>
<feature type="binding site" evidence="1">
    <location>
        <position position="383"/>
    </location>
    <ligand>
        <name>L-serine</name>
        <dbReference type="ChEBI" id="CHEBI:33384"/>
    </ligand>
</feature>
<proteinExistence type="inferred from homology"/>
<gene>
    <name evidence="1" type="primary">serS</name>
    <name type="ordered locus">Dhaf_0008</name>
</gene>
<evidence type="ECO:0000255" key="1">
    <source>
        <dbReference type="HAMAP-Rule" id="MF_00176"/>
    </source>
</evidence>
<reference key="1">
    <citation type="journal article" date="2012" name="BMC Microbiol.">
        <title>Genome sequence of Desulfitobacterium hafniense DCB-2, a Gram-positive anaerobe capable of dehalogenation and metal reduction.</title>
        <authorList>
            <person name="Kim S.H."/>
            <person name="Harzman C."/>
            <person name="Davis J.K."/>
            <person name="Hutcheson R."/>
            <person name="Broderick J.B."/>
            <person name="Marsh T.L."/>
            <person name="Tiedje J.M."/>
        </authorList>
    </citation>
    <scope>NUCLEOTIDE SEQUENCE [LARGE SCALE GENOMIC DNA]</scope>
    <source>
        <strain>DSM 10664 / DCB-2</strain>
    </source>
</reference>
<comment type="function">
    <text evidence="1">Catalyzes the attachment of serine to tRNA(Ser). Is also able to aminoacylate tRNA(Sec) with serine, to form the misacylated tRNA L-seryl-tRNA(Sec), which will be further converted into selenocysteinyl-tRNA(Sec).</text>
</comment>
<comment type="catalytic activity">
    <reaction evidence="1">
        <text>tRNA(Ser) + L-serine + ATP = L-seryl-tRNA(Ser) + AMP + diphosphate + H(+)</text>
        <dbReference type="Rhea" id="RHEA:12292"/>
        <dbReference type="Rhea" id="RHEA-COMP:9669"/>
        <dbReference type="Rhea" id="RHEA-COMP:9703"/>
        <dbReference type="ChEBI" id="CHEBI:15378"/>
        <dbReference type="ChEBI" id="CHEBI:30616"/>
        <dbReference type="ChEBI" id="CHEBI:33019"/>
        <dbReference type="ChEBI" id="CHEBI:33384"/>
        <dbReference type="ChEBI" id="CHEBI:78442"/>
        <dbReference type="ChEBI" id="CHEBI:78533"/>
        <dbReference type="ChEBI" id="CHEBI:456215"/>
        <dbReference type="EC" id="6.1.1.11"/>
    </reaction>
</comment>
<comment type="catalytic activity">
    <reaction evidence="1">
        <text>tRNA(Sec) + L-serine + ATP = L-seryl-tRNA(Sec) + AMP + diphosphate + H(+)</text>
        <dbReference type="Rhea" id="RHEA:42580"/>
        <dbReference type="Rhea" id="RHEA-COMP:9742"/>
        <dbReference type="Rhea" id="RHEA-COMP:10128"/>
        <dbReference type="ChEBI" id="CHEBI:15378"/>
        <dbReference type="ChEBI" id="CHEBI:30616"/>
        <dbReference type="ChEBI" id="CHEBI:33019"/>
        <dbReference type="ChEBI" id="CHEBI:33384"/>
        <dbReference type="ChEBI" id="CHEBI:78442"/>
        <dbReference type="ChEBI" id="CHEBI:78533"/>
        <dbReference type="ChEBI" id="CHEBI:456215"/>
        <dbReference type="EC" id="6.1.1.11"/>
    </reaction>
</comment>
<comment type="pathway">
    <text evidence="1">Aminoacyl-tRNA biosynthesis; selenocysteinyl-tRNA(Sec) biosynthesis; L-seryl-tRNA(Sec) from L-serine and tRNA(Sec): step 1/1.</text>
</comment>
<comment type="subunit">
    <text evidence="1">Homodimer. The tRNA molecule binds across the dimer.</text>
</comment>
<comment type="subcellular location">
    <subcellularLocation>
        <location evidence="1">Cytoplasm</location>
    </subcellularLocation>
</comment>
<comment type="domain">
    <text evidence="1">Consists of two distinct domains, a catalytic core and a N-terminal extension that is involved in tRNA binding.</text>
</comment>
<comment type="similarity">
    <text evidence="1">Belongs to the class-II aminoacyl-tRNA synthetase family. Type-1 seryl-tRNA synthetase subfamily.</text>
</comment>
<sequence length="421" mass="47941">MLDLKFVRTNPEVVKEALKKRNSNVSLDAFLEQEEERRKLLFEVESLKAQRNTVSEEVGRRKKHGEDAEQLILEMREVGQKVKNLEDKLGEIEQSMEAVLYEIPNIPHESVPVGADEEANVEVRTWGTPRSFDFEPLAHYEIGEKLDILDFARAGKVTGARFTFYKGLGAKLERALISFMLDRHSAKGYVEVLPPYMVHRNSMIGTGQLPKFEEDAFKVAGTDYFLIPTAEVPVTNMYREEILEAEQLPIHHCAYSACFRAEAGSAGRDTRGLIRQHQFNKVELVKFAFPENSYEELESLTRDAESILQELELPYRVMALSTGDLGFTSAKTYDLEVWLPSFNTYREISSCSNFEDFQARRANIRFRRAPKAKPEFLHTLNGSGLAIGRTVSAILENYQEADGRVRVPKALQPYMGVEYIG</sequence>
<name>SYS_DESHD</name>
<protein>
    <recommendedName>
        <fullName evidence="1">Serine--tRNA ligase</fullName>
        <ecNumber evidence="1">6.1.1.11</ecNumber>
    </recommendedName>
    <alternativeName>
        <fullName evidence="1">Seryl-tRNA synthetase</fullName>
        <shortName evidence="1">SerRS</shortName>
    </alternativeName>
    <alternativeName>
        <fullName evidence="1">Seryl-tRNA(Ser/Sec) synthetase</fullName>
    </alternativeName>
</protein>
<accession>B8FXX3</accession>